<evidence type="ECO:0000255" key="1"/>
<evidence type="ECO:0000256" key="2">
    <source>
        <dbReference type="SAM" id="MobiDB-lite"/>
    </source>
</evidence>
<evidence type="ECO:0000269" key="3">
    <source>
    </source>
</evidence>
<evidence type="ECO:0000269" key="4">
    <source>
    </source>
</evidence>
<evidence type="ECO:0000269" key="5">
    <source>
    </source>
</evidence>
<evidence type="ECO:0000269" key="6">
    <source>
    </source>
</evidence>
<evidence type="ECO:0000269" key="7">
    <source>
    </source>
</evidence>
<evidence type="ECO:0000305" key="8"/>
<evidence type="ECO:0007829" key="9">
    <source>
        <dbReference type="PDB" id="4CGE"/>
    </source>
</evidence>
<dbReference type="EC" id="3.-.-.-"/>
<dbReference type="EMBL" id="AL123456">
    <property type="protein sequence ID" value="CCP45243.1"/>
    <property type="molecule type" value="Genomic_DNA"/>
</dbReference>
<dbReference type="PIR" id="A70864">
    <property type="entry name" value="A70864"/>
</dbReference>
<dbReference type="RefSeq" id="NP_216966.1">
    <property type="nucleotide sequence ID" value="NC_000962.3"/>
</dbReference>
<dbReference type="RefSeq" id="WP_010886146.1">
    <property type="nucleotide sequence ID" value="NC_000962.3"/>
</dbReference>
<dbReference type="PDB" id="4CGE">
    <property type="method" value="X-ray"/>
    <property type="resolution" value="2.76 A"/>
    <property type="chains" value="A/B/C/D/E/F=98-172"/>
</dbReference>
<dbReference type="PDBsum" id="4CGE"/>
<dbReference type="SMR" id="O53177"/>
<dbReference type="STRING" id="83332.Rv2450c"/>
<dbReference type="CAZy" id="GH23">
    <property type="family name" value="Glycoside Hydrolase Family 23"/>
</dbReference>
<dbReference type="PaxDb" id="83332-Rv2450c"/>
<dbReference type="GeneID" id="885760"/>
<dbReference type="KEGG" id="mtu:Rv2450c"/>
<dbReference type="PATRIC" id="fig|83332.12.peg.2746"/>
<dbReference type="TubercuList" id="Rv2450c"/>
<dbReference type="eggNOG" id="COG1388">
    <property type="taxonomic scope" value="Bacteria"/>
</dbReference>
<dbReference type="InParanoid" id="O53177"/>
<dbReference type="OrthoDB" id="1404170at2"/>
<dbReference type="EvolutionaryTrace" id="O53177"/>
<dbReference type="Proteomes" id="UP000001584">
    <property type="component" value="Chromosome"/>
</dbReference>
<dbReference type="GO" id="GO:0005576">
    <property type="term" value="C:extracellular region"/>
    <property type="evidence" value="ECO:0000314"/>
    <property type="project" value="MTBBASE"/>
</dbReference>
<dbReference type="GO" id="GO:0016787">
    <property type="term" value="F:hydrolase activity"/>
    <property type="evidence" value="ECO:0007669"/>
    <property type="project" value="UniProtKB-KW"/>
</dbReference>
<dbReference type="GO" id="GO:0010629">
    <property type="term" value="P:negative regulation of gene expression"/>
    <property type="evidence" value="ECO:0000314"/>
    <property type="project" value="MTBBASE"/>
</dbReference>
<dbReference type="GO" id="GO:0010628">
    <property type="term" value="P:positive regulation of gene expression"/>
    <property type="evidence" value="ECO:0000314"/>
    <property type="project" value="MTBBASE"/>
</dbReference>
<dbReference type="GO" id="GO:0009372">
    <property type="term" value="P:quorum sensing"/>
    <property type="evidence" value="ECO:0000304"/>
    <property type="project" value="UniProtKB"/>
</dbReference>
<dbReference type="GO" id="GO:0042127">
    <property type="term" value="P:regulation of cell population proliferation"/>
    <property type="evidence" value="ECO:0000314"/>
    <property type="project" value="MTBBASE"/>
</dbReference>
<dbReference type="CDD" id="cd13925">
    <property type="entry name" value="RPF"/>
    <property type="match status" value="1"/>
</dbReference>
<dbReference type="Gene3D" id="1.10.530.10">
    <property type="match status" value="1"/>
</dbReference>
<dbReference type="InterPro" id="IPR023346">
    <property type="entry name" value="Lysozyme-like_dom_sf"/>
</dbReference>
<dbReference type="InterPro" id="IPR010618">
    <property type="entry name" value="RPF"/>
</dbReference>
<dbReference type="Pfam" id="PF06737">
    <property type="entry name" value="Transglycosylas"/>
    <property type="match status" value="1"/>
</dbReference>
<dbReference type="SUPFAM" id="SSF53955">
    <property type="entry name" value="Lysozyme-like"/>
    <property type="match status" value="1"/>
</dbReference>
<keyword id="KW-0002">3D-structure</keyword>
<keyword id="KW-0378">Hydrolase</keyword>
<keyword id="KW-1185">Reference proteome</keyword>
<keyword id="KW-0732">Signal</keyword>
<keyword id="KW-0843">Virulence</keyword>
<name>RPFE_MYCTU</name>
<reference key="1">
    <citation type="journal article" date="1998" name="Nature">
        <title>Deciphering the biology of Mycobacterium tuberculosis from the complete genome sequence.</title>
        <authorList>
            <person name="Cole S.T."/>
            <person name="Brosch R."/>
            <person name="Parkhill J."/>
            <person name="Garnier T."/>
            <person name="Churcher C.M."/>
            <person name="Harris D.E."/>
            <person name="Gordon S.V."/>
            <person name="Eiglmeier K."/>
            <person name="Gas S."/>
            <person name="Barry C.E. III"/>
            <person name="Tekaia F."/>
            <person name="Badcock K."/>
            <person name="Basham D."/>
            <person name="Brown D."/>
            <person name="Chillingworth T."/>
            <person name="Connor R."/>
            <person name="Davies R.M."/>
            <person name="Devlin K."/>
            <person name="Feltwell T."/>
            <person name="Gentles S."/>
            <person name="Hamlin N."/>
            <person name="Holroyd S."/>
            <person name="Hornsby T."/>
            <person name="Jagels K."/>
            <person name="Krogh A."/>
            <person name="McLean J."/>
            <person name="Moule S."/>
            <person name="Murphy L.D."/>
            <person name="Oliver S."/>
            <person name="Osborne J."/>
            <person name="Quail M.A."/>
            <person name="Rajandream M.A."/>
            <person name="Rogers J."/>
            <person name="Rutter S."/>
            <person name="Seeger K."/>
            <person name="Skelton S."/>
            <person name="Squares S."/>
            <person name="Squares R."/>
            <person name="Sulston J.E."/>
            <person name="Taylor K."/>
            <person name="Whitehead S."/>
            <person name="Barrell B.G."/>
        </authorList>
    </citation>
    <scope>NUCLEOTIDE SEQUENCE [LARGE SCALE GENOMIC DNA]</scope>
    <source>
        <strain>ATCC 25618 / H37Rv</strain>
    </source>
</reference>
<reference key="2">
    <citation type="journal article" date="2002" name="Mol. Microbiol.">
        <title>A family of autocrine growth factors in Mycobacterium tuberculosis.</title>
        <authorList>
            <person name="Mukamolova G.V."/>
            <person name="Turapov O.A."/>
            <person name="Young D.I."/>
            <person name="Kaprelyants A.S."/>
            <person name="Kell D.B."/>
            <person name="Young M."/>
        </authorList>
    </citation>
    <scope>FUNCTION</scope>
    <scope>INDUCTION</scope>
    <source>
        <strain>ATCC 25618 / H37Rv</strain>
    </source>
</reference>
<reference key="3">
    <citation type="journal article" date="2003" name="Infect. Immun.">
        <title>Proteins of the Rpf family: immune cell reactivity and vaccination efficacy against tuberculosis in mice.</title>
        <authorList>
            <person name="Yeremeev V.V."/>
            <person name="Kondratieva T.K."/>
            <person name="Rubakova E.I."/>
            <person name="Petrovskaya S.N."/>
            <person name="Kazarian K.A."/>
            <person name="Telkov M.V."/>
            <person name="Biketov S.F."/>
            <person name="Kaprelyants A.S."/>
            <person name="Apt A.S."/>
        </authorList>
    </citation>
    <scope>BIOTECHNOLOGY</scope>
    <source>
        <strain>ATCC 25618 / H37Rv</strain>
    </source>
</reference>
<reference key="4">
    <citation type="journal article" date="2004" name="Tuberculosis">
        <title>Global expression profiling of strains harbouring null mutations reveals that the five rpf-like genes of Mycobacterium tuberculosis show functional redundancy.</title>
        <authorList>
            <person name="Downing K.J."/>
            <person name="Betts J.C."/>
            <person name="Young D.I."/>
            <person name="McAdam R.A."/>
            <person name="Kelly F."/>
            <person name="Young M."/>
            <person name="Mizrahi V."/>
        </authorList>
    </citation>
    <scope>DISRUPTION PHENOTYPE</scope>
    <source>
        <strain>ATCC 25618 / H37Rv</strain>
    </source>
</reference>
<reference key="5">
    <citation type="journal article" date="2007" name="Mol. Microbiol.">
        <title>A partner for the resuscitation-promoting factors of Mycobacterium tuberculosis.</title>
        <authorList>
            <person name="Hett E.C."/>
            <person name="Chao M.C."/>
            <person name="Steyn A.J."/>
            <person name="Fortune S.M."/>
            <person name="Deng L.L."/>
            <person name="Rubin E.J."/>
        </authorList>
    </citation>
    <scope>INTERACTION WITH RIPA</scope>
    <source>
        <strain>ATCC 25618 / H37Rv</strain>
    </source>
</reference>
<reference key="6">
    <citation type="journal article" date="2008" name="Mol. Microbiol.">
        <title>The resuscitation-promoting factors of Mycobacterium tuberculosis are required for virulence and resuscitation from dormancy but are collectively dispensable for growth in vitro.</title>
        <authorList>
            <person name="Kana B.D."/>
            <person name="Gordhan B.G."/>
            <person name="Downing K.J."/>
            <person name="Sung N."/>
            <person name="Vostroktunova G."/>
            <person name="Machowski E.E."/>
            <person name="Tsenova L."/>
            <person name="Young M."/>
            <person name="Kaprelyants A."/>
            <person name="Kaplan G."/>
            <person name="Mizrahi V."/>
        </authorList>
    </citation>
    <scope>DISRUPTION PHENOTYPE</scope>
    <source>
        <strain>ATCC 25618 / H37Rv</strain>
    </source>
</reference>
<sequence>MKNARTTLIAAAIAGTLVTTSPAGIANADDAGLDPNAAAGPDAVGFDPNLPPAPDAAPVDTPPAPEDAGFDPNLPPPLAPDFLSPPAEEAPPVPVAYSVNWDAIAQCESGGNWSINTGNGYYGGLRFTAGTWRANGGSGSAANASREEQIRVAENVLRSQGIRAWPVCGRRG</sequence>
<organism>
    <name type="scientific">Mycobacterium tuberculosis (strain ATCC 25618 / H37Rv)</name>
    <dbReference type="NCBI Taxonomy" id="83332"/>
    <lineage>
        <taxon>Bacteria</taxon>
        <taxon>Bacillati</taxon>
        <taxon>Actinomycetota</taxon>
        <taxon>Actinomycetes</taxon>
        <taxon>Mycobacteriales</taxon>
        <taxon>Mycobacteriaceae</taxon>
        <taxon>Mycobacterium</taxon>
        <taxon>Mycobacterium tuberculosis complex</taxon>
    </lineage>
</organism>
<comment type="function">
    <text evidence="3">Factor that stimulates resuscitation of dormant cells. Has peptidoglycan (PG) hydrolytic activity. Active in the pM concentration range. Has little to no effect on actively-growing cells. PG fragments could either directly activate the resuscitation pathway of dormant bacteria or serve as a substrate for endogenous Rpf, resulting in low molecular weight products with resuscitation activity.</text>
</comment>
<comment type="function">
    <text evidence="3">Stimulates growth of stationary phase M.bovis (a slow-growing Mycobacterium), reduces the lag phase of diluted fast-growers M.smegmatis and Micrococcus luteus. Sequential gene disruption indicates RpfB and RpfE are higher than RpfD and RpfC in functional hierarchy.</text>
</comment>
<comment type="subunit">
    <text evidence="6">Interacts with RipA.</text>
</comment>
<comment type="induction">
    <text evidence="3">Expressed in actively growing cells.</text>
</comment>
<comment type="disruption phenotype">
    <text evidence="5 7">Not essential, disruption of rpfE alone has no effect on growth or survival in liquid culture, nor in mouse infection models, although colony size is reduced. Alterations in gene expression are seen. All 5 genes in this family can be deleted without affecting growth in culture, however quadruple deletion mutants (rpfA-rpfC-rpfB-rpfE or rpfA-rpfC-rpfD-rpfE) are not able to resuscitate spontaneously in the presence or absence of O(2), and are attenuated in a mouse infection model.</text>
</comment>
<comment type="biotechnology">
    <text evidence="4">Might be a good vaccine candidate.</text>
</comment>
<comment type="similarity">
    <text evidence="8">Belongs to the transglycosylase family. Rpf subfamily.</text>
</comment>
<protein>
    <recommendedName>
        <fullName>Resuscitation-promoting factor RpfE</fullName>
        <ecNumber>3.-.-.-</ecNumber>
    </recommendedName>
</protein>
<gene>
    <name type="primary">rpfE</name>
    <name type="ordered locus">Rv2450c</name>
    <name type="ORF">MTV008.06c</name>
</gene>
<feature type="signal peptide" evidence="1">
    <location>
        <begin position="1"/>
        <end position="28"/>
    </location>
</feature>
<feature type="chain" id="PRO_0000421031" description="Resuscitation-promoting factor RpfE">
    <location>
        <begin position="29"/>
        <end position="172"/>
    </location>
</feature>
<feature type="region of interest" description="Disordered" evidence="2">
    <location>
        <begin position="33"/>
        <end position="89"/>
    </location>
</feature>
<feature type="compositionally biased region" description="Pro residues" evidence="2">
    <location>
        <begin position="49"/>
        <end position="65"/>
    </location>
</feature>
<feature type="helix" evidence="9">
    <location>
        <begin position="101"/>
        <end position="109"/>
    </location>
</feature>
<feature type="strand" evidence="9">
    <location>
        <begin position="118"/>
        <end position="120"/>
    </location>
</feature>
<feature type="turn" evidence="9">
    <location>
        <begin position="123"/>
        <end position="126"/>
    </location>
</feature>
<feature type="helix" evidence="9">
    <location>
        <begin position="129"/>
        <end position="134"/>
    </location>
</feature>
<feature type="turn" evidence="9">
    <location>
        <begin position="141"/>
        <end position="143"/>
    </location>
</feature>
<feature type="helix" evidence="9">
    <location>
        <begin position="146"/>
        <end position="159"/>
    </location>
</feature>
<feature type="helix" evidence="9">
    <location>
        <begin position="162"/>
        <end position="164"/>
    </location>
</feature>
<feature type="turn" evidence="9">
    <location>
        <begin position="166"/>
        <end position="169"/>
    </location>
</feature>
<accession>O53177</accession>
<accession>L0TCD7</accession>
<proteinExistence type="evidence at protein level"/>